<feature type="signal peptide" evidence="5">
    <location>
        <begin position="1"/>
        <end position="25"/>
    </location>
</feature>
<feature type="chain" id="PRO_0000008006" description="Endo-1,4-beta-xylanase C">
    <location>
        <begin position="26"/>
        <end position="608"/>
    </location>
</feature>
<feature type="domain" description="GH11 1" evidence="1">
    <location>
        <begin position="40"/>
        <end position="250"/>
    </location>
</feature>
<feature type="domain" description="GH11 2" evidence="1">
    <location>
        <begin position="316"/>
        <end position="514"/>
    </location>
</feature>
<feature type="region of interest" description="Disordered" evidence="4">
    <location>
        <begin position="263"/>
        <end position="296"/>
    </location>
</feature>
<feature type="region of interest" description="Disordered" evidence="4">
    <location>
        <begin position="520"/>
        <end position="539"/>
    </location>
</feature>
<feature type="compositionally biased region" description="Low complexity" evidence="4">
    <location>
        <begin position="263"/>
        <end position="294"/>
    </location>
</feature>
<feature type="compositionally biased region" description="Low complexity" evidence="4">
    <location>
        <begin position="527"/>
        <end position="539"/>
    </location>
</feature>
<feature type="active site" description="Nucleophile" evidence="2">
    <location>
        <position position="142"/>
    </location>
</feature>
<feature type="active site" description="Proton donor" evidence="3">
    <location>
        <position position="237"/>
    </location>
</feature>
<feature type="active site" description="Nucleophile" evidence="2">
    <location>
        <position position="409"/>
    </location>
</feature>
<feature type="active site" description="Proton donor" evidence="3">
    <location>
        <position position="501"/>
    </location>
</feature>
<feature type="sequence conflict" description="In Ref. 1; AAA21848." evidence="6" ref="1">
    <original>T</original>
    <variation>I</variation>
    <location>
        <position position="175"/>
    </location>
</feature>
<proteinExistence type="evidence at protein level"/>
<evidence type="ECO:0000255" key="1">
    <source>
        <dbReference type="PROSITE-ProRule" id="PRU01097"/>
    </source>
</evidence>
<evidence type="ECO:0000255" key="2">
    <source>
        <dbReference type="PROSITE-ProRule" id="PRU10062"/>
    </source>
</evidence>
<evidence type="ECO:0000255" key="3">
    <source>
        <dbReference type="PROSITE-ProRule" id="PRU10063"/>
    </source>
</evidence>
<evidence type="ECO:0000256" key="4">
    <source>
        <dbReference type="SAM" id="MobiDB-lite"/>
    </source>
</evidence>
<evidence type="ECO:0000269" key="5">
    <source>
    </source>
</evidence>
<evidence type="ECO:0000305" key="6"/>
<name>XYNC_FIBSS</name>
<sequence>MKTFSVTKSSVVFAMALGMASTAFAQDFCSNAQHSGQKVTITSNQTGKIGDIGYELWDENGHGGSATFYSDGSMDCNITGAKDYLCRAGLSLGSNKTYKELGGDMIAEFKLVKSGAQNVGYSYIGIYGWMEGVSGTPSQLVEYYVIDNTLANDMPGSWIGNERKGTITVDGGTYTVYRNTRTGPAIKNSGNVTFYQYFSVRTSPRDCGTINISEHMRQWEKMGLTMGKLYEAKVLGEAGNVNGEVRGGHMDFPHAKVYVKNGSDPVSSSSVKSSSSTDAPKSSSSKGNGNVSGKIDACKDVMGHEGKETRTQGQNNSSVTGNVGSSPYHYEIWYQGGNNSMTFYDNGTYKASWNGTNDFLARVGFKYDEKHTYEELGPIDAYYKWSKQGSAGGYNYIGIYGWTVDPLVEYYIVDDWFNKPGANLLGQRKGEFTVDGDTYEIWQNTRVQQPSIKGTQTFPQYFSVRKSARSCGHIDITAHMKKWEELGMKMGKMYEAKVLVEAGGGSGSFDVTYFKMTDKAHPLAQPEPESSSSEAKVESSSSTVALHAAPKMELKSGNFQVFDMQGRFLGTVKLDAGASVAQVLKANFKNAGIYMVKQGNFMQRVAVK</sequence>
<comment type="function">
    <text>Cleaves xylans with the production of xylose, xylobiose and xylo-oligosaccharides.</text>
</comment>
<comment type="catalytic activity">
    <reaction>
        <text>Endohydrolysis of (1-&gt;4)-beta-D-xylosidic linkages in xylans.</text>
        <dbReference type="EC" id="3.2.1.8"/>
    </reaction>
</comment>
<comment type="pathway">
    <text>Glycan degradation; xylan degradation.</text>
</comment>
<comment type="similarity">
    <text evidence="6">Belongs to the glycosyl hydrolase 11 (cellulase G) family.</text>
</comment>
<gene>
    <name type="primary">xynC</name>
    <name type="ordered locus">Fisuc_0362</name>
    <name type="ordered locus">FSU_0777</name>
</gene>
<organism>
    <name type="scientific">Fibrobacter succinogenes (strain ATCC 19169 / S85)</name>
    <dbReference type="NCBI Taxonomy" id="59374"/>
    <lineage>
        <taxon>Bacteria</taxon>
        <taxon>Pseudomonadati</taxon>
        <taxon>Fibrobacterota</taxon>
        <taxon>Fibrobacteria</taxon>
        <taxon>Fibrobacterales</taxon>
        <taxon>Fibrobacteraceae</taxon>
        <taxon>Fibrobacter</taxon>
    </lineage>
</organism>
<reference key="1">
    <citation type="journal article" date="1993" name="J. Bacteriol.">
        <title>The xynC gene from Fibrobacter succinogenes S85 codes for a xylanase with two similar catalytic domains.</title>
        <authorList>
            <person name="Paradis F.W."/>
            <person name="Zhu H."/>
            <person name="Krell P.J."/>
            <person name="Phillips J.P."/>
            <person name="Forsberg C.W."/>
        </authorList>
    </citation>
    <scope>NUCLEOTIDE SEQUENCE [GENOMIC DNA]</scope>
    <scope>PROTEIN SEQUENCE OF 26-41</scope>
</reference>
<reference key="2">
    <citation type="submission" date="2009-10" db="EMBL/GenBank/DDBJ databases">
        <title>Complete sequence of Fibrobacter succinogenes subsp. succinogenes S85.</title>
        <authorList>
            <consortium name="US DOE Joint Genome Institute"/>
            <person name="Lucas S."/>
            <person name="Copeland A."/>
            <person name="Lapidus A."/>
            <person name="Glavina del Rio T."/>
            <person name="Tice H."/>
            <person name="Bruce D."/>
            <person name="Goodwin L."/>
            <person name="Pitluck S."/>
            <person name="Chertkov O."/>
            <person name="Detter J.C."/>
            <person name="Han C."/>
            <person name="Tapia R."/>
            <person name="Larimer F."/>
            <person name="Land M."/>
            <person name="Hauser L."/>
            <person name="Kyrpides N."/>
            <person name="Mikhailova N."/>
            <person name="Weimer P.J."/>
            <person name="Stevenson D.M."/>
            <person name="Boyum J."/>
            <person name="Brumm P.I."/>
            <person name="Mead D."/>
        </authorList>
    </citation>
    <scope>NUCLEOTIDE SEQUENCE [LARGE SCALE GENOMIC DNA]</scope>
    <source>
        <strain>ATCC 19169 / S85</strain>
    </source>
</reference>
<reference key="3">
    <citation type="submission" date="2010-08" db="EMBL/GenBank/DDBJ databases">
        <title>Complete sequence of Fibrobacter succinogenes subsp. succinogenes S85.</title>
        <authorList>
            <person name="Durkin A.S."/>
            <person name="Nelson K.E."/>
            <person name="Morrison M."/>
            <person name="Forsberg C.W."/>
            <person name="Wilson D.B."/>
            <person name="Russell J.B."/>
            <person name="Cann I.K.O."/>
            <person name="Mackie R.I."/>
            <person name="White B.A."/>
        </authorList>
    </citation>
    <scope>NUCLEOTIDE SEQUENCE [LARGE SCALE GENOMIC DNA]</scope>
    <source>
        <strain>ATCC 19169 / S85</strain>
    </source>
</reference>
<protein>
    <recommendedName>
        <fullName>Endo-1,4-beta-xylanase C</fullName>
        <shortName>Xylanase C</shortName>
        <ecNumber>3.2.1.8</ecNumber>
    </recommendedName>
    <alternativeName>
        <fullName>1,4-beta-D-xylan xylanohydrolase C</fullName>
    </alternativeName>
</protein>
<keyword id="KW-0119">Carbohydrate metabolism</keyword>
<keyword id="KW-0136">Cellulose degradation</keyword>
<keyword id="KW-0903">Direct protein sequencing</keyword>
<keyword id="KW-0326">Glycosidase</keyword>
<keyword id="KW-0378">Hydrolase</keyword>
<keyword id="KW-0624">Polysaccharide degradation</keyword>
<keyword id="KW-0677">Repeat</keyword>
<keyword id="KW-0732">Signal</keyword>
<keyword id="KW-0858">Xylan degradation</keyword>
<dbReference type="EC" id="3.2.1.8"/>
<dbReference type="EMBL" id="U01037">
    <property type="protein sequence ID" value="AAA21848.1"/>
    <property type="molecule type" value="Genomic_DNA"/>
</dbReference>
<dbReference type="EMBL" id="CP001792">
    <property type="protein sequence ID" value="ACX73974.1"/>
    <property type="molecule type" value="Genomic_DNA"/>
</dbReference>
<dbReference type="EMBL" id="CP002158">
    <property type="protein sequence ID" value="ADL26842.1"/>
    <property type="molecule type" value="Genomic_DNA"/>
</dbReference>
<dbReference type="PIR" id="B53295">
    <property type="entry name" value="B53295"/>
</dbReference>
<dbReference type="RefSeq" id="WP_012820204.1">
    <property type="nucleotide sequence ID" value="NC_013410.1"/>
</dbReference>
<dbReference type="SMR" id="P35811"/>
<dbReference type="STRING" id="59374.FSU_0777"/>
<dbReference type="CAZy" id="GH11">
    <property type="family name" value="Glycoside Hydrolase Family 11"/>
</dbReference>
<dbReference type="KEGG" id="fsc:FSU_0777"/>
<dbReference type="KEGG" id="fsu:Fisuc_0362"/>
<dbReference type="PATRIC" id="fig|59374.8.peg.752"/>
<dbReference type="eggNOG" id="COG0726">
    <property type="taxonomic scope" value="Bacteria"/>
</dbReference>
<dbReference type="HOGENOM" id="CLU_448881_0_0_0"/>
<dbReference type="OrthoDB" id="9806342at2"/>
<dbReference type="UniPathway" id="UPA00114"/>
<dbReference type="Proteomes" id="UP000000517">
    <property type="component" value="Chromosome"/>
</dbReference>
<dbReference type="GO" id="GO:0031176">
    <property type="term" value="F:endo-1,4-beta-xylanase activity"/>
    <property type="evidence" value="ECO:0007669"/>
    <property type="project" value="UniProtKB-EC"/>
</dbReference>
<dbReference type="GO" id="GO:0030245">
    <property type="term" value="P:cellulose catabolic process"/>
    <property type="evidence" value="ECO:0007669"/>
    <property type="project" value="UniProtKB-KW"/>
</dbReference>
<dbReference type="GO" id="GO:0045493">
    <property type="term" value="P:xylan catabolic process"/>
    <property type="evidence" value="ECO:0007669"/>
    <property type="project" value="UniProtKB-UniPathway"/>
</dbReference>
<dbReference type="Gene3D" id="2.60.120.180">
    <property type="match status" value="2"/>
</dbReference>
<dbReference type="InterPro" id="IPR013320">
    <property type="entry name" value="ConA-like_dom_sf"/>
</dbReference>
<dbReference type="InterPro" id="IPR013319">
    <property type="entry name" value="GH11/12"/>
</dbReference>
<dbReference type="InterPro" id="IPR018208">
    <property type="entry name" value="GH11_AS_1"/>
</dbReference>
<dbReference type="InterPro" id="IPR033119">
    <property type="entry name" value="GH11_AS_2"/>
</dbReference>
<dbReference type="InterPro" id="IPR033123">
    <property type="entry name" value="GH11_dom"/>
</dbReference>
<dbReference type="InterPro" id="IPR001137">
    <property type="entry name" value="Glyco_hydro_11"/>
</dbReference>
<dbReference type="PANTHER" id="PTHR46828">
    <property type="entry name" value="ENDO-1,4-BETA-XYLANASE A-RELATED"/>
    <property type="match status" value="1"/>
</dbReference>
<dbReference type="PANTHER" id="PTHR46828:SF2">
    <property type="entry name" value="ENDO-1,4-BETA-XYLANASE A-RELATED"/>
    <property type="match status" value="1"/>
</dbReference>
<dbReference type="Pfam" id="PF00457">
    <property type="entry name" value="Glyco_hydro_11"/>
    <property type="match status" value="2"/>
</dbReference>
<dbReference type="PRINTS" id="PR00911">
    <property type="entry name" value="GLHYDRLASE11"/>
</dbReference>
<dbReference type="SUPFAM" id="SSF49899">
    <property type="entry name" value="Concanavalin A-like lectins/glucanases"/>
    <property type="match status" value="2"/>
</dbReference>
<dbReference type="PROSITE" id="PS00776">
    <property type="entry name" value="GH11_1"/>
    <property type="match status" value="1"/>
</dbReference>
<dbReference type="PROSITE" id="PS00777">
    <property type="entry name" value="GH11_2"/>
    <property type="match status" value="1"/>
</dbReference>
<dbReference type="PROSITE" id="PS51761">
    <property type="entry name" value="GH11_3"/>
    <property type="match status" value="2"/>
</dbReference>
<accession>P35811</accession>
<accession>C9RKP6</accession>
<accession>D9S812</accession>